<proteinExistence type="inferred from homology"/>
<name>OHRL2_STAEQ</name>
<accession>Q5HKS7</accession>
<organism>
    <name type="scientific">Staphylococcus epidermidis (strain ATCC 35984 / DSM 28319 / BCRC 17069 / CCUG 31568 / BM 3577 / RP62A)</name>
    <dbReference type="NCBI Taxonomy" id="176279"/>
    <lineage>
        <taxon>Bacteria</taxon>
        <taxon>Bacillati</taxon>
        <taxon>Bacillota</taxon>
        <taxon>Bacilli</taxon>
        <taxon>Bacillales</taxon>
        <taxon>Staphylococcaceae</taxon>
        <taxon>Staphylococcus</taxon>
    </lineage>
</organism>
<comment type="similarity">
    <text evidence="1">Belongs to the OsmC/Ohr family.</text>
</comment>
<evidence type="ECO:0000305" key="1"/>
<keyword id="KW-1185">Reference proteome</keyword>
<protein>
    <recommendedName>
        <fullName>Organic hydroperoxide resistance protein-like 2</fullName>
    </recommendedName>
</protein>
<reference key="1">
    <citation type="journal article" date="2005" name="J. Bacteriol.">
        <title>Insights on evolution of virulence and resistance from the complete genome analysis of an early methicillin-resistant Staphylococcus aureus strain and a biofilm-producing methicillin-resistant Staphylococcus epidermidis strain.</title>
        <authorList>
            <person name="Gill S.R."/>
            <person name="Fouts D.E."/>
            <person name="Archer G.L."/>
            <person name="Mongodin E.F."/>
            <person name="DeBoy R.T."/>
            <person name="Ravel J."/>
            <person name="Paulsen I.T."/>
            <person name="Kolonay J.F."/>
            <person name="Brinkac L.M."/>
            <person name="Beanan M.J."/>
            <person name="Dodson R.J."/>
            <person name="Daugherty S.C."/>
            <person name="Madupu R."/>
            <person name="Angiuoli S.V."/>
            <person name="Durkin A.S."/>
            <person name="Haft D.H."/>
            <person name="Vamathevan J.J."/>
            <person name="Khouri H."/>
            <person name="Utterback T.R."/>
            <person name="Lee C."/>
            <person name="Dimitrov G."/>
            <person name="Jiang L."/>
            <person name="Qin H."/>
            <person name="Weidman J."/>
            <person name="Tran K."/>
            <person name="Kang K.H."/>
            <person name="Hance I.R."/>
            <person name="Nelson K.E."/>
            <person name="Fraser C.M."/>
        </authorList>
    </citation>
    <scope>NUCLEOTIDE SEQUENCE [LARGE SCALE GENOMIC DNA]</scope>
    <source>
        <strain>ATCC 35984 / DSM 28319 / BCRC 17069 / CCUG 31568 / BM 3577 / RP62A</strain>
    </source>
</reference>
<gene>
    <name type="ordered locus">SERP2265</name>
</gene>
<sequence length="142" mass="15390">MTNSIYSTTMISNGGRDGRVFSPDNTFVQSLATPKEMGGQGGNDTNPEQLFAAGYSACFNSALSLILSQNKISDANPEVEITIELLKDDTDNGFKLGADIKVTLENMSQQDAEKFVEQAHQFCPYSKATRGNIDVQLDVTAQ</sequence>
<dbReference type="EMBL" id="CP000029">
    <property type="protein sequence ID" value="AAW53126.1"/>
    <property type="molecule type" value="Genomic_DNA"/>
</dbReference>
<dbReference type="RefSeq" id="WP_010959326.1">
    <property type="nucleotide sequence ID" value="NC_002976.3"/>
</dbReference>
<dbReference type="SMR" id="Q5HKS7"/>
<dbReference type="STRING" id="176279.SERP2265"/>
<dbReference type="KEGG" id="ser:SERP2265"/>
<dbReference type="eggNOG" id="COG1764">
    <property type="taxonomic scope" value="Bacteria"/>
</dbReference>
<dbReference type="HOGENOM" id="CLU_106355_2_1_9"/>
<dbReference type="Proteomes" id="UP000000531">
    <property type="component" value="Chromosome"/>
</dbReference>
<dbReference type="GO" id="GO:0006979">
    <property type="term" value="P:response to oxidative stress"/>
    <property type="evidence" value="ECO:0007669"/>
    <property type="project" value="InterPro"/>
</dbReference>
<dbReference type="Gene3D" id="2.20.25.10">
    <property type="match status" value="1"/>
</dbReference>
<dbReference type="Gene3D" id="3.30.300.20">
    <property type="match status" value="1"/>
</dbReference>
<dbReference type="InterPro" id="IPR015946">
    <property type="entry name" value="KH_dom-like_a/b"/>
</dbReference>
<dbReference type="InterPro" id="IPR019953">
    <property type="entry name" value="OHR"/>
</dbReference>
<dbReference type="InterPro" id="IPR003718">
    <property type="entry name" value="OsmC/Ohr_fam"/>
</dbReference>
<dbReference type="InterPro" id="IPR036102">
    <property type="entry name" value="OsmC/Ohrsf"/>
</dbReference>
<dbReference type="NCBIfam" id="TIGR03561">
    <property type="entry name" value="organ_hyd_perox"/>
    <property type="match status" value="1"/>
</dbReference>
<dbReference type="PANTHER" id="PTHR33797">
    <property type="entry name" value="ORGANIC HYDROPEROXIDE RESISTANCE PROTEIN-LIKE"/>
    <property type="match status" value="1"/>
</dbReference>
<dbReference type="PANTHER" id="PTHR33797:SF2">
    <property type="entry name" value="ORGANIC HYDROPEROXIDE RESISTANCE PROTEIN-LIKE"/>
    <property type="match status" value="1"/>
</dbReference>
<dbReference type="Pfam" id="PF02566">
    <property type="entry name" value="OsmC"/>
    <property type="match status" value="1"/>
</dbReference>
<dbReference type="SUPFAM" id="SSF82784">
    <property type="entry name" value="OsmC-like"/>
    <property type="match status" value="1"/>
</dbReference>
<feature type="chain" id="PRO_0000288965" description="Organic hydroperoxide resistance protein-like 2">
    <location>
        <begin position="1"/>
        <end position="142"/>
    </location>
</feature>